<name>Y2558_MYCPA</name>
<sequence>MDGTDAEAPGQTAPSRAESLVAHAEASISEDALLAAARERAVDIGAGAVTPAVGALLSLLTKLSGGKAIAEVGTGAGVSGLWLLSGMSDDGVLTTIDIEPEYLRLAKQAFAEAGIGPSRTRLIGGRAQEVLTRLADEYYDLVFIDADPIDQPDYVVEGVRLLRPGGVIVVHRAALGGRAGDPAARDAEVVAVREAARLIAEDERLTPALVPLGDGILAAVRD</sequence>
<feature type="chain" id="PRO_0000380099" description="Putative O-methyltransferase MAP_2558">
    <location>
        <begin position="1"/>
        <end position="222"/>
    </location>
</feature>
<feature type="binding site" evidence="2">
    <location>
        <position position="49"/>
    </location>
    <ligand>
        <name>S-adenosyl-L-methionine</name>
        <dbReference type="ChEBI" id="CHEBI:59789"/>
    </ligand>
</feature>
<feature type="binding site" evidence="2">
    <location>
        <position position="71"/>
    </location>
    <ligand>
        <name>S-adenosyl-L-methionine</name>
        <dbReference type="ChEBI" id="CHEBI:59789"/>
    </ligand>
</feature>
<feature type="binding site" evidence="2">
    <location>
        <begin position="73"/>
        <end position="74"/>
    </location>
    <ligand>
        <name>S-adenosyl-L-methionine</name>
        <dbReference type="ChEBI" id="CHEBI:59789"/>
    </ligand>
</feature>
<feature type="binding site" evidence="2">
    <location>
        <position position="79"/>
    </location>
    <ligand>
        <name>S-adenosyl-L-methionine</name>
        <dbReference type="ChEBI" id="CHEBI:59789"/>
    </ligand>
</feature>
<feature type="binding site" evidence="2">
    <location>
        <position position="97"/>
    </location>
    <ligand>
        <name>S-adenosyl-L-methionine</name>
        <dbReference type="ChEBI" id="CHEBI:59789"/>
    </ligand>
</feature>
<feature type="binding site" evidence="2">
    <location>
        <position position="98"/>
    </location>
    <ligand>
        <name>S-adenosyl-L-methionine</name>
        <dbReference type="ChEBI" id="CHEBI:59789"/>
    </ligand>
</feature>
<feature type="binding site" evidence="1">
    <location>
        <position position="145"/>
    </location>
    <ligand>
        <name>substrate</name>
    </ligand>
</feature>
<feature type="binding site" evidence="2">
    <location>
        <position position="147"/>
    </location>
    <ligand>
        <name>S-adenosyl-L-methionine</name>
        <dbReference type="ChEBI" id="CHEBI:59789"/>
    </ligand>
</feature>
<dbReference type="EC" id="2.1.1.-"/>
<dbReference type="EMBL" id="AE016958">
    <property type="protein sequence ID" value="AAS04875.1"/>
    <property type="status" value="ALT_INIT"/>
    <property type="molecule type" value="Genomic_DNA"/>
</dbReference>
<dbReference type="RefSeq" id="WP_003878464.1">
    <property type="nucleotide sequence ID" value="NZ_CP106873.1"/>
</dbReference>
<dbReference type="SMR" id="Q73WV2"/>
<dbReference type="STRING" id="262316.MAP_2558"/>
<dbReference type="KEGG" id="mpa:MAP_2558"/>
<dbReference type="PATRIC" id="fig|262316.17.peg.2715"/>
<dbReference type="eggNOG" id="COG4122">
    <property type="taxonomic scope" value="Bacteria"/>
</dbReference>
<dbReference type="HOGENOM" id="CLU_067676_2_0_11"/>
<dbReference type="Proteomes" id="UP000000580">
    <property type="component" value="Chromosome"/>
</dbReference>
<dbReference type="GO" id="GO:0008171">
    <property type="term" value="F:O-methyltransferase activity"/>
    <property type="evidence" value="ECO:0007669"/>
    <property type="project" value="InterPro"/>
</dbReference>
<dbReference type="GO" id="GO:0008757">
    <property type="term" value="F:S-adenosylmethionine-dependent methyltransferase activity"/>
    <property type="evidence" value="ECO:0007669"/>
    <property type="project" value="TreeGrafter"/>
</dbReference>
<dbReference type="GO" id="GO:0032259">
    <property type="term" value="P:methylation"/>
    <property type="evidence" value="ECO:0007669"/>
    <property type="project" value="UniProtKB-KW"/>
</dbReference>
<dbReference type="CDD" id="cd02440">
    <property type="entry name" value="AdoMet_MTases"/>
    <property type="match status" value="1"/>
</dbReference>
<dbReference type="Gene3D" id="3.40.50.150">
    <property type="entry name" value="Vaccinia Virus protein VP39"/>
    <property type="match status" value="1"/>
</dbReference>
<dbReference type="InterPro" id="IPR050362">
    <property type="entry name" value="Cation-dep_OMT"/>
</dbReference>
<dbReference type="InterPro" id="IPR029063">
    <property type="entry name" value="SAM-dependent_MTases_sf"/>
</dbReference>
<dbReference type="InterPro" id="IPR002935">
    <property type="entry name" value="SAM_O-MeTrfase"/>
</dbReference>
<dbReference type="PANTHER" id="PTHR10509:SF85">
    <property type="entry name" value="O-METHYLTRANSFERASE RV1220C-RELATED"/>
    <property type="match status" value="1"/>
</dbReference>
<dbReference type="PANTHER" id="PTHR10509">
    <property type="entry name" value="O-METHYLTRANSFERASE-RELATED"/>
    <property type="match status" value="1"/>
</dbReference>
<dbReference type="Pfam" id="PF01596">
    <property type="entry name" value="Methyltransf_3"/>
    <property type="match status" value="1"/>
</dbReference>
<dbReference type="SUPFAM" id="SSF53335">
    <property type="entry name" value="S-adenosyl-L-methionine-dependent methyltransferases"/>
    <property type="match status" value="1"/>
</dbReference>
<dbReference type="PROSITE" id="PS51682">
    <property type="entry name" value="SAM_OMT_I"/>
    <property type="match status" value="1"/>
</dbReference>
<proteinExistence type="inferred from homology"/>
<keyword id="KW-0489">Methyltransferase</keyword>
<keyword id="KW-1185">Reference proteome</keyword>
<keyword id="KW-0949">S-adenosyl-L-methionine</keyword>
<keyword id="KW-0808">Transferase</keyword>
<accession>Q73WV2</accession>
<comment type="similarity">
    <text evidence="2">Belongs to the class I-like SAM-binding methyltransferase superfamily. Cation-dependent O-methyltransferase family.</text>
</comment>
<comment type="sequence caution" evidence="3">
    <conflict type="erroneous initiation">
        <sequence resource="EMBL-CDS" id="AAS04875"/>
    </conflict>
</comment>
<gene>
    <name type="ordered locus">MAP_2558</name>
</gene>
<reference key="1">
    <citation type="journal article" date="2005" name="Proc. Natl. Acad. Sci. U.S.A.">
        <title>The complete genome sequence of Mycobacterium avium subspecies paratuberculosis.</title>
        <authorList>
            <person name="Li L."/>
            <person name="Bannantine J.P."/>
            <person name="Zhang Q."/>
            <person name="Amonsin A."/>
            <person name="May B.J."/>
            <person name="Alt D."/>
            <person name="Banerji N."/>
            <person name="Kanjilal S."/>
            <person name="Kapur V."/>
        </authorList>
    </citation>
    <scope>NUCLEOTIDE SEQUENCE [LARGE SCALE GENOMIC DNA]</scope>
    <source>
        <strain>ATCC BAA-968 / K-10</strain>
    </source>
</reference>
<protein>
    <recommendedName>
        <fullName>Putative O-methyltransferase MAP_2558</fullName>
        <ecNumber>2.1.1.-</ecNumber>
    </recommendedName>
</protein>
<evidence type="ECO:0000250" key="1"/>
<evidence type="ECO:0000255" key="2">
    <source>
        <dbReference type="PROSITE-ProRule" id="PRU01019"/>
    </source>
</evidence>
<evidence type="ECO:0000305" key="3"/>
<organism>
    <name type="scientific">Mycolicibacterium paratuberculosis (strain ATCC BAA-968 / K-10)</name>
    <name type="common">Mycobacterium paratuberculosis</name>
    <dbReference type="NCBI Taxonomy" id="262316"/>
    <lineage>
        <taxon>Bacteria</taxon>
        <taxon>Bacillati</taxon>
        <taxon>Actinomycetota</taxon>
        <taxon>Actinomycetes</taxon>
        <taxon>Mycobacteriales</taxon>
        <taxon>Mycobacteriaceae</taxon>
        <taxon>Mycobacterium</taxon>
        <taxon>Mycobacterium avium complex (MAC)</taxon>
    </lineage>
</organism>